<evidence type="ECO:0000255" key="1">
    <source>
        <dbReference type="HAMAP-Rule" id="MF_00204"/>
    </source>
</evidence>
<accession>B2S264</accession>
<name>UVRB_TREPS</name>
<feature type="chain" id="PRO_1000099575" description="UvrABC system protein B">
    <location>
        <begin position="1"/>
        <end position="668"/>
    </location>
</feature>
<feature type="domain" description="Helicase ATP-binding" evidence="1">
    <location>
        <begin position="25"/>
        <end position="171"/>
    </location>
</feature>
<feature type="domain" description="Helicase C-terminal" evidence="1">
    <location>
        <begin position="431"/>
        <end position="594"/>
    </location>
</feature>
<feature type="domain" description="UVR" evidence="1">
    <location>
        <begin position="627"/>
        <end position="662"/>
    </location>
</feature>
<feature type="short sequence motif" description="Beta-hairpin">
    <location>
        <begin position="91"/>
        <end position="114"/>
    </location>
</feature>
<feature type="binding site" evidence="1">
    <location>
        <begin position="38"/>
        <end position="45"/>
    </location>
    <ligand>
        <name>ATP</name>
        <dbReference type="ChEBI" id="CHEBI:30616"/>
    </ligand>
</feature>
<keyword id="KW-0067">ATP-binding</keyword>
<keyword id="KW-0963">Cytoplasm</keyword>
<keyword id="KW-0227">DNA damage</keyword>
<keyword id="KW-0228">DNA excision</keyword>
<keyword id="KW-0234">DNA repair</keyword>
<keyword id="KW-0267">Excision nuclease</keyword>
<keyword id="KW-0347">Helicase</keyword>
<keyword id="KW-0378">Hydrolase</keyword>
<keyword id="KW-0547">Nucleotide-binding</keyword>
<keyword id="KW-0742">SOS response</keyword>
<protein>
    <recommendedName>
        <fullName evidence="1">UvrABC system protein B</fullName>
        <shortName evidence="1">Protein UvrB</shortName>
    </recommendedName>
    <alternativeName>
        <fullName evidence="1">Excinuclease ABC subunit B</fullName>
    </alternativeName>
</protein>
<organism>
    <name type="scientific">Treponema pallidum subsp. pallidum (strain SS14)</name>
    <dbReference type="NCBI Taxonomy" id="455434"/>
    <lineage>
        <taxon>Bacteria</taxon>
        <taxon>Pseudomonadati</taxon>
        <taxon>Spirochaetota</taxon>
        <taxon>Spirochaetia</taxon>
        <taxon>Spirochaetales</taxon>
        <taxon>Treponemataceae</taxon>
        <taxon>Treponema</taxon>
    </lineage>
</organism>
<comment type="function">
    <text evidence="1">The UvrABC repair system catalyzes the recognition and processing of DNA lesions. A damage recognition complex composed of 2 UvrA and 2 UvrB subunits scans DNA for abnormalities. Upon binding of the UvrA(2)B(2) complex to a putative damaged site, the DNA wraps around one UvrB monomer. DNA wrap is dependent on ATP binding by UvrB and probably causes local melting of the DNA helix, facilitating insertion of UvrB beta-hairpin between the DNA strands. Then UvrB probes one DNA strand for the presence of a lesion. If a lesion is found the UvrA subunits dissociate and the UvrB-DNA preincision complex is formed. This complex is subsequently bound by UvrC and the second UvrB is released. If no lesion is found, the DNA wraps around the other UvrB subunit that will check the other stand for damage.</text>
</comment>
<comment type="subunit">
    <text evidence="1">Forms a heterotetramer with UvrA during the search for lesions. Interacts with UvrC in an incision complex.</text>
</comment>
<comment type="subcellular location">
    <subcellularLocation>
        <location evidence="1">Cytoplasm</location>
    </subcellularLocation>
</comment>
<comment type="domain">
    <text evidence="1">The beta-hairpin motif is involved in DNA binding.</text>
</comment>
<comment type="similarity">
    <text evidence="1">Belongs to the UvrB family.</text>
</comment>
<gene>
    <name evidence="1" type="primary">uvrB</name>
    <name type="ordered locus">TPASS_0116</name>
</gene>
<sequence>MKEFKLHASFQPAGDQIAAIDALVRGLHAGARFQTLKGVTGSGKTFTVANVIARVQKPTLVISHNKTLSAQLYREFKGFFPDNAVEYFVSYYDYYQPESYVPARDLYIEKDASINAEINRMRLSATFSLMERRDVIVVATVSCIYGLGLPESWRDLRIHVEVNQCLDLEDLKRQLVSLQYERNDAVLECGRFRVRGDVIEIFPAYLEEFYRIECDWDRVVRIRRIHPVSGAVLREFEELTVYPAKHFVLKEDAIPRAMDRIRQELDERLVQLTQENKLAEAARLKTRTEYDLEMLGEMGYCHGIENYSAPIAGRKSGEPPVTLLHYFPKDFVLFVDESHVTLPQLGAMYEGDRVRKQNLIDFGFRLPCARDNRPLKDSEFEALLNQAVFISATPGVKERTQSVQIVEQLIRPTGLLDPCIEVRKTDGQIEDICQRVKACSARNERSLVLTLTKKMAEDLTDYFNGLGIRTKYVHSEIETIERVEILTSLRAGECEVLVGINLLREGIDLPEVAFIAILDANIVGFLRSTTSLIQIIGRAARNARGTVVMYADAISDAMREAIEETARRRKIQMAYNRAHGITPRTIKKSIEDILVREQEVKKDAARVQVAPLLRAADADVRTHAARKKMVQALRLHMKVCARELRFEEAALIRDKILQLQRQDEQNGV</sequence>
<dbReference type="EMBL" id="CP000805">
    <property type="protein sequence ID" value="ACD70543.1"/>
    <property type="molecule type" value="Genomic_DNA"/>
</dbReference>
<dbReference type="RefSeq" id="WP_010881565.1">
    <property type="nucleotide sequence ID" value="NC_021508.1"/>
</dbReference>
<dbReference type="SMR" id="B2S264"/>
<dbReference type="GeneID" id="93875913"/>
<dbReference type="KEGG" id="tpp:TPASS_0116"/>
<dbReference type="PATRIC" id="fig|455434.6.peg.119"/>
<dbReference type="Proteomes" id="UP000001202">
    <property type="component" value="Chromosome"/>
</dbReference>
<dbReference type="GO" id="GO:0005737">
    <property type="term" value="C:cytoplasm"/>
    <property type="evidence" value="ECO:0007669"/>
    <property type="project" value="UniProtKB-SubCell"/>
</dbReference>
<dbReference type="GO" id="GO:0009380">
    <property type="term" value="C:excinuclease repair complex"/>
    <property type="evidence" value="ECO:0007669"/>
    <property type="project" value="InterPro"/>
</dbReference>
<dbReference type="GO" id="GO:0005524">
    <property type="term" value="F:ATP binding"/>
    <property type="evidence" value="ECO:0007669"/>
    <property type="project" value="UniProtKB-UniRule"/>
</dbReference>
<dbReference type="GO" id="GO:0016887">
    <property type="term" value="F:ATP hydrolysis activity"/>
    <property type="evidence" value="ECO:0007669"/>
    <property type="project" value="InterPro"/>
</dbReference>
<dbReference type="GO" id="GO:0003677">
    <property type="term" value="F:DNA binding"/>
    <property type="evidence" value="ECO:0007669"/>
    <property type="project" value="UniProtKB-UniRule"/>
</dbReference>
<dbReference type="GO" id="GO:0009381">
    <property type="term" value="F:excinuclease ABC activity"/>
    <property type="evidence" value="ECO:0007669"/>
    <property type="project" value="UniProtKB-UniRule"/>
</dbReference>
<dbReference type="GO" id="GO:0004386">
    <property type="term" value="F:helicase activity"/>
    <property type="evidence" value="ECO:0007669"/>
    <property type="project" value="UniProtKB-KW"/>
</dbReference>
<dbReference type="GO" id="GO:0006289">
    <property type="term" value="P:nucleotide-excision repair"/>
    <property type="evidence" value="ECO:0007669"/>
    <property type="project" value="UniProtKB-UniRule"/>
</dbReference>
<dbReference type="GO" id="GO:0009432">
    <property type="term" value="P:SOS response"/>
    <property type="evidence" value="ECO:0007669"/>
    <property type="project" value="UniProtKB-UniRule"/>
</dbReference>
<dbReference type="CDD" id="cd17916">
    <property type="entry name" value="DEXHc_UvrB"/>
    <property type="match status" value="1"/>
</dbReference>
<dbReference type="CDD" id="cd18790">
    <property type="entry name" value="SF2_C_UvrB"/>
    <property type="match status" value="1"/>
</dbReference>
<dbReference type="Gene3D" id="3.40.50.300">
    <property type="entry name" value="P-loop containing nucleotide triphosphate hydrolases"/>
    <property type="match status" value="3"/>
</dbReference>
<dbReference type="Gene3D" id="4.10.860.10">
    <property type="entry name" value="UVR domain"/>
    <property type="match status" value="1"/>
</dbReference>
<dbReference type="HAMAP" id="MF_00204">
    <property type="entry name" value="UvrB"/>
    <property type="match status" value="1"/>
</dbReference>
<dbReference type="InterPro" id="IPR006935">
    <property type="entry name" value="Helicase/UvrB_N"/>
</dbReference>
<dbReference type="InterPro" id="IPR014001">
    <property type="entry name" value="Helicase_ATP-bd"/>
</dbReference>
<dbReference type="InterPro" id="IPR001650">
    <property type="entry name" value="Helicase_C-like"/>
</dbReference>
<dbReference type="InterPro" id="IPR027417">
    <property type="entry name" value="P-loop_NTPase"/>
</dbReference>
<dbReference type="InterPro" id="IPR001943">
    <property type="entry name" value="UVR_dom"/>
</dbReference>
<dbReference type="InterPro" id="IPR036876">
    <property type="entry name" value="UVR_dom_sf"/>
</dbReference>
<dbReference type="InterPro" id="IPR004807">
    <property type="entry name" value="UvrB"/>
</dbReference>
<dbReference type="InterPro" id="IPR041471">
    <property type="entry name" value="UvrB_inter"/>
</dbReference>
<dbReference type="InterPro" id="IPR024759">
    <property type="entry name" value="UvrB_YAD/RRR_dom"/>
</dbReference>
<dbReference type="NCBIfam" id="NF003673">
    <property type="entry name" value="PRK05298.1"/>
    <property type="match status" value="1"/>
</dbReference>
<dbReference type="NCBIfam" id="TIGR00631">
    <property type="entry name" value="uvrb"/>
    <property type="match status" value="1"/>
</dbReference>
<dbReference type="PANTHER" id="PTHR24029">
    <property type="entry name" value="UVRABC SYSTEM PROTEIN B"/>
    <property type="match status" value="1"/>
</dbReference>
<dbReference type="PANTHER" id="PTHR24029:SF0">
    <property type="entry name" value="UVRABC SYSTEM PROTEIN B"/>
    <property type="match status" value="1"/>
</dbReference>
<dbReference type="Pfam" id="PF00271">
    <property type="entry name" value="Helicase_C"/>
    <property type="match status" value="1"/>
</dbReference>
<dbReference type="Pfam" id="PF04851">
    <property type="entry name" value="ResIII"/>
    <property type="match status" value="1"/>
</dbReference>
<dbReference type="Pfam" id="PF02151">
    <property type="entry name" value="UVR"/>
    <property type="match status" value="1"/>
</dbReference>
<dbReference type="Pfam" id="PF12344">
    <property type="entry name" value="UvrB"/>
    <property type="match status" value="1"/>
</dbReference>
<dbReference type="Pfam" id="PF17757">
    <property type="entry name" value="UvrB_inter"/>
    <property type="match status" value="1"/>
</dbReference>
<dbReference type="SMART" id="SM00487">
    <property type="entry name" value="DEXDc"/>
    <property type="match status" value="1"/>
</dbReference>
<dbReference type="SMART" id="SM00490">
    <property type="entry name" value="HELICc"/>
    <property type="match status" value="1"/>
</dbReference>
<dbReference type="SUPFAM" id="SSF46600">
    <property type="entry name" value="C-terminal UvrC-binding domain of UvrB"/>
    <property type="match status" value="1"/>
</dbReference>
<dbReference type="SUPFAM" id="SSF52540">
    <property type="entry name" value="P-loop containing nucleoside triphosphate hydrolases"/>
    <property type="match status" value="2"/>
</dbReference>
<dbReference type="PROSITE" id="PS51192">
    <property type="entry name" value="HELICASE_ATP_BIND_1"/>
    <property type="match status" value="1"/>
</dbReference>
<dbReference type="PROSITE" id="PS51194">
    <property type="entry name" value="HELICASE_CTER"/>
    <property type="match status" value="1"/>
</dbReference>
<dbReference type="PROSITE" id="PS50151">
    <property type="entry name" value="UVR"/>
    <property type="match status" value="1"/>
</dbReference>
<proteinExistence type="inferred from homology"/>
<reference key="1">
    <citation type="journal article" date="2008" name="BMC Microbiol.">
        <title>Complete genome sequence of Treponema pallidum ssp. pallidum strain SS14 determined with oligonucleotide arrays.</title>
        <authorList>
            <person name="Matejkova P."/>
            <person name="Strouhal M."/>
            <person name="Smajs D."/>
            <person name="Norris S.J."/>
            <person name="Palzkill T."/>
            <person name="Petrosino J.F."/>
            <person name="Sodergren E."/>
            <person name="Norton J.E."/>
            <person name="Singh J."/>
            <person name="Richmond T.A."/>
            <person name="Molla M.N."/>
            <person name="Albert T.J."/>
            <person name="Weinstock G.M."/>
        </authorList>
    </citation>
    <scope>NUCLEOTIDE SEQUENCE [LARGE SCALE GENOMIC DNA]</scope>
    <source>
        <strain>SS14</strain>
    </source>
</reference>